<name>CLPX_GLUDA</name>
<reference key="1">
    <citation type="journal article" date="2009" name="BMC Genomics">
        <title>Complete genome sequence of the sugarcane nitrogen-fixing endophyte Gluconacetobacter diazotrophicus Pal5.</title>
        <authorList>
            <person name="Bertalan M."/>
            <person name="Albano R."/>
            <person name="de Padua V."/>
            <person name="Rouws L."/>
            <person name="Rojas C."/>
            <person name="Hemerly A."/>
            <person name="Teixeira K."/>
            <person name="Schwab S."/>
            <person name="Araujo J."/>
            <person name="Oliveira A."/>
            <person name="Franca L."/>
            <person name="Magalhaes V."/>
            <person name="Alqueres S."/>
            <person name="Cardoso A."/>
            <person name="Almeida W."/>
            <person name="Loureiro M.M."/>
            <person name="Nogueira E."/>
            <person name="Cidade D."/>
            <person name="Oliveira D."/>
            <person name="Simao T."/>
            <person name="Macedo J."/>
            <person name="Valadao A."/>
            <person name="Dreschsel M."/>
            <person name="Freitas F."/>
            <person name="Vidal M."/>
            <person name="Guedes H."/>
            <person name="Rodrigues E."/>
            <person name="Meneses C."/>
            <person name="Brioso P."/>
            <person name="Pozzer L."/>
            <person name="Figueiredo D."/>
            <person name="Montano H."/>
            <person name="Junior J."/>
            <person name="de Souza Filho G."/>
            <person name="Martin Quintana Flores V."/>
            <person name="Ferreira B."/>
            <person name="Branco A."/>
            <person name="Gonzalez P."/>
            <person name="Guillobel H."/>
            <person name="Lemos M."/>
            <person name="Seibel L."/>
            <person name="Macedo J."/>
            <person name="Alves-Ferreira M."/>
            <person name="Sachetto-Martins G."/>
            <person name="Coelho A."/>
            <person name="Santos E."/>
            <person name="Amaral G."/>
            <person name="Neves A."/>
            <person name="Pacheco A.B."/>
            <person name="Carvalho D."/>
            <person name="Lery L."/>
            <person name="Bisch P."/>
            <person name="Rossle S.C."/>
            <person name="Urmenyi T."/>
            <person name="Rael Pereira A."/>
            <person name="Silva R."/>
            <person name="Rondinelli E."/>
            <person name="von Kruger W."/>
            <person name="Martins O."/>
            <person name="Baldani J.I."/>
            <person name="Ferreira P.C."/>
        </authorList>
    </citation>
    <scope>NUCLEOTIDE SEQUENCE [LARGE SCALE GENOMIC DNA]</scope>
    <source>
        <strain>ATCC 49037 / DSM 5601 / CCUG 37298 / CIP 103539 / LMG 7603 / PAl5</strain>
    </source>
</reference>
<reference key="2">
    <citation type="journal article" date="2010" name="Stand. Genomic Sci.">
        <title>Two genome sequences of the same bacterial strain, Gluconacetobacter diazotrophicus PAl 5, suggest a new standard in genome sequence submission.</title>
        <authorList>
            <person name="Giongo A."/>
            <person name="Tyler H.L."/>
            <person name="Zipperer U.N."/>
            <person name="Triplett E.W."/>
        </authorList>
    </citation>
    <scope>NUCLEOTIDE SEQUENCE [LARGE SCALE GENOMIC DNA]</scope>
    <source>
        <strain>ATCC 49037 / DSM 5601 / CCUG 37298 / CIP 103539 / LMG 7603 / PAl5</strain>
    </source>
</reference>
<evidence type="ECO:0000255" key="1">
    <source>
        <dbReference type="HAMAP-Rule" id="MF_00175"/>
    </source>
</evidence>
<evidence type="ECO:0000255" key="2">
    <source>
        <dbReference type="PROSITE-ProRule" id="PRU01250"/>
    </source>
</evidence>
<comment type="function">
    <text evidence="1">ATP-dependent specificity component of the Clp protease. It directs the protease to specific substrates. Can perform chaperone functions in the absence of ClpP.</text>
</comment>
<comment type="subunit">
    <text evidence="1">Component of the ClpX-ClpP complex. Forms a hexameric ring that, in the presence of ATP, binds to fourteen ClpP subunits assembled into a disk-like structure with a central cavity, resembling the structure of eukaryotic proteasomes.</text>
</comment>
<comment type="similarity">
    <text evidence="1">Belongs to the ClpX chaperone family.</text>
</comment>
<protein>
    <recommendedName>
        <fullName evidence="1">ATP-dependent Clp protease ATP-binding subunit ClpX</fullName>
    </recommendedName>
</protein>
<dbReference type="EMBL" id="AM889285">
    <property type="protein sequence ID" value="CAP56986.1"/>
    <property type="molecule type" value="Genomic_DNA"/>
</dbReference>
<dbReference type="EMBL" id="CP001189">
    <property type="protein sequence ID" value="ACI53052.1"/>
    <property type="molecule type" value="Genomic_DNA"/>
</dbReference>
<dbReference type="RefSeq" id="WP_012227337.1">
    <property type="nucleotide sequence ID" value="NC_010125.1"/>
</dbReference>
<dbReference type="SMR" id="A9HRV3"/>
<dbReference type="STRING" id="272568.GDI3043"/>
<dbReference type="KEGG" id="gdi:GDI3043"/>
<dbReference type="KEGG" id="gdj:Gdia_3325"/>
<dbReference type="eggNOG" id="COG1219">
    <property type="taxonomic scope" value="Bacteria"/>
</dbReference>
<dbReference type="HOGENOM" id="CLU_014218_8_2_5"/>
<dbReference type="OrthoDB" id="9804062at2"/>
<dbReference type="Proteomes" id="UP000001176">
    <property type="component" value="Chromosome"/>
</dbReference>
<dbReference type="GO" id="GO:0009376">
    <property type="term" value="C:HslUV protease complex"/>
    <property type="evidence" value="ECO:0007669"/>
    <property type="project" value="TreeGrafter"/>
</dbReference>
<dbReference type="GO" id="GO:0005524">
    <property type="term" value="F:ATP binding"/>
    <property type="evidence" value="ECO:0007669"/>
    <property type="project" value="UniProtKB-UniRule"/>
</dbReference>
<dbReference type="GO" id="GO:0016887">
    <property type="term" value="F:ATP hydrolysis activity"/>
    <property type="evidence" value="ECO:0007669"/>
    <property type="project" value="InterPro"/>
</dbReference>
<dbReference type="GO" id="GO:0140662">
    <property type="term" value="F:ATP-dependent protein folding chaperone"/>
    <property type="evidence" value="ECO:0007669"/>
    <property type="project" value="InterPro"/>
</dbReference>
<dbReference type="GO" id="GO:0046983">
    <property type="term" value="F:protein dimerization activity"/>
    <property type="evidence" value="ECO:0007669"/>
    <property type="project" value="InterPro"/>
</dbReference>
<dbReference type="GO" id="GO:0051082">
    <property type="term" value="F:unfolded protein binding"/>
    <property type="evidence" value="ECO:0007669"/>
    <property type="project" value="UniProtKB-UniRule"/>
</dbReference>
<dbReference type="GO" id="GO:0008270">
    <property type="term" value="F:zinc ion binding"/>
    <property type="evidence" value="ECO:0007669"/>
    <property type="project" value="InterPro"/>
</dbReference>
<dbReference type="GO" id="GO:0051301">
    <property type="term" value="P:cell division"/>
    <property type="evidence" value="ECO:0007669"/>
    <property type="project" value="TreeGrafter"/>
</dbReference>
<dbReference type="GO" id="GO:0051603">
    <property type="term" value="P:proteolysis involved in protein catabolic process"/>
    <property type="evidence" value="ECO:0007669"/>
    <property type="project" value="TreeGrafter"/>
</dbReference>
<dbReference type="CDD" id="cd19497">
    <property type="entry name" value="RecA-like_ClpX"/>
    <property type="match status" value="1"/>
</dbReference>
<dbReference type="FunFam" id="1.10.8.60:FF:000002">
    <property type="entry name" value="ATP-dependent Clp protease ATP-binding subunit ClpX"/>
    <property type="match status" value="1"/>
</dbReference>
<dbReference type="FunFam" id="3.40.50.300:FF:000005">
    <property type="entry name" value="ATP-dependent Clp protease ATP-binding subunit ClpX"/>
    <property type="match status" value="1"/>
</dbReference>
<dbReference type="Gene3D" id="1.10.8.60">
    <property type="match status" value="1"/>
</dbReference>
<dbReference type="Gene3D" id="6.20.220.10">
    <property type="entry name" value="ClpX chaperone, C4-type zinc finger domain"/>
    <property type="match status" value="1"/>
</dbReference>
<dbReference type="Gene3D" id="3.40.50.300">
    <property type="entry name" value="P-loop containing nucleotide triphosphate hydrolases"/>
    <property type="match status" value="1"/>
</dbReference>
<dbReference type="HAMAP" id="MF_00175">
    <property type="entry name" value="ClpX"/>
    <property type="match status" value="1"/>
</dbReference>
<dbReference type="InterPro" id="IPR003593">
    <property type="entry name" value="AAA+_ATPase"/>
</dbReference>
<dbReference type="InterPro" id="IPR050052">
    <property type="entry name" value="ATP-dep_Clp_protease_ClpX"/>
</dbReference>
<dbReference type="InterPro" id="IPR003959">
    <property type="entry name" value="ATPase_AAA_core"/>
</dbReference>
<dbReference type="InterPro" id="IPR019489">
    <property type="entry name" value="Clp_ATPase_C"/>
</dbReference>
<dbReference type="InterPro" id="IPR004487">
    <property type="entry name" value="Clp_protease_ATP-bd_su_ClpX"/>
</dbReference>
<dbReference type="InterPro" id="IPR046425">
    <property type="entry name" value="ClpX_bact"/>
</dbReference>
<dbReference type="InterPro" id="IPR027417">
    <property type="entry name" value="P-loop_NTPase"/>
</dbReference>
<dbReference type="InterPro" id="IPR010603">
    <property type="entry name" value="Znf_CppX_C4"/>
</dbReference>
<dbReference type="InterPro" id="IPR038366">
    <property type="entry name" value="Znf_CppX_C4_sf"/>
</dbReference>
<dbReference type="NCBIfam" id="TIGR00382">
    <property type="entry name" value="clpX"/>
    <property type="match status" value="1"/>
</dbReference>
<dbReference type="NCBIfam" id="NF003745">
    <property type="entry name" value="PRK05342.1"/>
    <property type="match status" value="1"/>
</dbReference>
<dbReference type="PANTHER" id="PTHR48102:SF7">
    <property type="entry name" value="ATP-DEPENDENT CLP PROTEASE ATP-BINDING SUBUNIT CLPX-LIKE, MITOCHONDRIAL"/>
    <property type="match status" value="1"/>
</dbReference>
<dbReference type="PANTHER" id="PTHR48102">
    <property type="entry name" value="ATP-DEPENDENT CLP PROTEASE ATP-BINDING SUBUNIT CLPX-LIKE, MITOCHONDRIAL-RELATED"/>
    <property type="match status" value="1"/>
</dbReference>
<dbReference type="Pfam" id="PF07724">
    <property type="entry name" value="AAA_2"/>
    <property type="match status" value="1"/>
</dbReference>
<dbReference type="Pfam" id="PF10431">
    <property type="entry name" value="ClpB_D2-small"/>
    <property type="match status" value="1"/>
</dbReference>
<dbReference type="Pfam" id="PF06689">
    <property type="entry name" value="zf-C4_ClpX"/>
    <property type="match status" value="1"/>
</dbReference>
<dbReference type="SMART" id="SM00382">
    <property type="entry name" value="AAA"/>
    <property type="match status" value="1"/>
</dbReference>
<dbReference type="SMART" id="SM01086">
    <property type="entry name" value="ClpB_D2-small"/>
    <property type="match status" value="1"/>
</dbReference>
<dbReference type="SMART" id="SM00994">
    <property type="entry name" value="zf-C4_ClpX"/>
    <property type="match status" value="1"/>
</dbReference>
<dbReference type="SUPFAM" id="SSF57716">
    <property type="entry name" value="Glucocorticoid receptor-like (DNA-binding domain)"/>
    <property type="match status" value="1"/>
</dbReference>
<dbReference type="SUPFAM" id="SSF52540">
    <property type="entry name" value="P-loop containing nucleoside triphosphate hydrolases"/>
    <property type="match status" value="1"/>
</dbReference>
<dbReference type="PROSITE" id="PS51902">
    <property type="entry name" value="CLPX_ZB"/>
    <property type="match status" value="1"/>
</dbReference>
<keyword id="KW-0067">ATP-binding</keyword>
<keyword id="KW-0143">Chaperone</keyword>
<keyword id="KW-0479">Metal-binding</keyword>
<keyword id="KW-0547">Nucleotide-binding</keyword>
<keyword id="KW-1185">Reference proteome</keyword>
<keyword id="KW-0862">Zinc</keyword>
<proteinExistence type="inferred from homology"/>
<organism>
    <name type="scientific">Gluconacetobacter diazotrophicus (strain ATCC 49037 / DSM 5601 / CCUG 37298 / CIP 103539 / LMG 7603 / PAl5)</name>
    <dbReference type="NCBI Taxonomy" id="272568"/>
    <lineage>
        <taxon>Bacteria</taxon>
        <taxon>Pseudomonadati</taxon>
        <taxon>Pseudomonadota</taxon>
        <taxon>Alphaproteobacteria</taxon>
        <taxon>Acetobacterales</taxon>
        <taxon>Acetobacteraceae</taxon>
        <taxon>Gluconacetobacter</taxon>
    </lineage>
</organism>
<sequence>MNNKSSDSKNTLYCSFCGKSQHEVRKLIAGPTVFICDECVELCMDIIREEHKTHLVKSRDGVPTPKEICKVLDDYVIGQFYAKKVLSVAVHNHYKRLAHSQKNNDVEIAKSNILLVGPTGSGKTLLAQTLARILDVPFTMADATTLTEAGYVGEDVENIILKLLQAADYNVERAQRGIVYIDEIDKISRKSDNPSITRDVSGEGVQQALLKIMEGTVASVPPQGGRKHPQQEFLQVDTTNMLFICGGAFAGLDKIISARGKGSGIGFGADVQSPDERRTGAILRDVEPEDLLKFGLIPEFIGRLPVVATLEDLDEAALIEILTKPKNALVKQYARLFQMEGVKLTFTDDALKQVALRAIARRTGARGLRAIMESILLSTMFDLPGLENVDEVVINKDVAESKTSPVYVYGKEKPAEQSA</sequence>
<accession>A9HRV3</accession>
<accession>B5ZLB0</accession>
<feature type="chain" id="PRO_1000077160" description="ATP-dependent Clp protease ATP-binding subunit ClpX">
    <location>
        <begin position="1"/>
        <end position="419"/>
    </location>
</feature>
<feature type="domain" description="ClpX-type ZB" evidence="2">
    <location>
        <begin position="2"/>
        <end position="55"/>
    </location>
</feature>
<feature type="binding site" evidence="2">
    <location>
        <position position="14"/>
    </location>
    <ligand>
        <name>Zn(2+)</name>
        <dbReference type="ChEBI" id="CHEBI:29105"/>
    </ligand>
</feature>
<feature type="binding site" evidence="2">
    <location>
        <position position="17"/>
    </location>
    <ligand>
        <name>Zn(2+)</name>
        <dbReference type="ChEBI" id="CHEBI:29105"/>
    </ligand>
</feature>
<feature type="binding site" evidence="2">
    <location>
        <position position="36"/>
    </location>
    <ligand>
        <name>Zn(2+)</name>
        <dbReference type="ChEBI" id="CHEBI:29105"/>
    </ligand>
</feature>
<feature type="binding site" evidence="2">
    <location>
        <position position="39"/>
    </location>
    <ligand>
        <name>Zn(2+)</name>
        <dbReference type="ChEBI" id="CHEBI:29105"/>
    </ligand>
</feature>
<feature type="binding site" evidence="1">
    <location>
        <begin position="118"/>
        <end position="125"/>
    </location>
    <ligand>
        <name>ATP</name>
        <dbReference type="ChEBI" id="CHEBI:30616"/>
    </ligand>
</feature>
<gene>
    <name evidence="1" type="primary">clpX</name>
    <name type="ordered locus">GDI3043</name>
    <name type="ordered locus">Gdia_3325</name>
</gene>